<proteinExistence type="inferred from homology"/>
<sequence length="121" mass="13295">MIQQESYLTVADNSGAKRIQCIRVLGTNRRYAHVGDVIVAAVKDAAPNMGVKKSDVVKAVVVRTKATMRRETGNSIRFDDNAAVIINDDKNPKGTRVFGPVARELRERSFTKIVSLAPEVI</sequence>
<protein>
    <recommendedName>
        <fullName evidence="1">Large ribosomal subunit protein uL14</fullName>
    </recommendedName>
    <alternativeName>
        <fullName evidence="2">50S ribosomal protein L14</fullName>
    </alternativeName>
</protein>
<comment type="function">
    <text evidence="1">Binds to 23S rRNA. Forms part of two intersubunit bridges in the 70S ribosome.</text>
</comment>
<comment type="subunit">
    <text evidence="1">Part of the 50S ribosomal subunit. Forms a cluster with proteins L3 and L19. In the 70S ribosome, L14 and L19 interact and together make contacts with the 16S rRNA in bridges B5 and B8.</text>
</comment>
<comment type="similarity">
    <text evidence="1">Belongs to the universal ribosomal protein uL14 family.</text>
</comment>
<dbReference type="EMBL" id="CP000110">
    <property type="protein sequence ID" value="ABB34142.1"/>
    <property type="molecule type" value="Genomic_DNA"/>
</dbReference>
<dbReference type="RefSeq" id="WP_006851211.1">
    <property type="nucleotide sequence ID" value="NC_007516.1"/>
</dbReference>
<dbReference type="SMR" id="Q3AMP0"/>
<dbReference type="STRING" id="110662.Syncc9605_0366"/>
<dbReference type="KEGG" id="syd:Syncc9605_0366"/>
<dbReference type="eggNOG" id="COG0093">
    <property type="taxonomic scope" value="Bacteria"/>
</dbReference>
<dbReference type="HOGENOM" id="CLU_095071_2_1_3"/>
<dbReference type="OrthoDB" id="9806379at2"/>
<dbReference type="GO" id="GO:0022625">
    <property type="term" value="C:cytosolic large ribosomal subunit"/>
    <property type="evidence" value="ECO:0007669"/>
    <property type="project" value="TreeGrafter"/>
</dbReference>
<dbReference type="GO" id="GO:0070180">
    <property type="term" value="F:large ribosomal subunit rRNA binding"/>
    <property type="evidence" value="ECO:0007669"/>
    <property type="project" value="TreeGrafter"/>
</dbReference>
<dbReference type="GO" id="GO:0003735">
    <property type="term" value="F:structural constituent of ribosome"/>
    <property type="evidence" value="ECO:0007669"/>
    <property type="project" value="InterPro"/>
</dbReference>
<dbReference type="GO" id="GO:0006412">
    <property type="term" value="P:translation"/>
    <property type="evidence" value="ECO:0007669"/>
    <property type="project" value="UniProtKB-UniRule"/>
</dbReference>
<dbReference type="CDD" id="cd00337">
    <property type="entry name" value="Ribosomal_uL14"/>
    <property type="match status" value="1"/>
</dbReference>
<dbReference type="FunFam" id="2.40.150.20:FF:000001">
    <property type="entry name" value="50S ribosomal protein L14"/>
    <property type="match status" value="1"/>
</dbReference>
<dbReference type="Gene3D" id="2.40.150.20">
    <property type="entry name" value="Ribosomal protein L14"/>
    <property type="match status" value="1"/>
</dbReference>
<dbReference type="HAMAP" id="MF_01367">
    <property type="entry name" value="Ribosomal_uL14"/>
    <property type="match status" value="1"/>
</dbReference>
<dbReference type="InterPro" id="IPR000218">
    <property type="entry name" value="Ribosomal_uL14"/>
</dbReference>
<dbReference type="InterPro" id="IPR005745">
    <property type="entry name" value="Ribosomal_uL14_bac-type"/>
</dbReference>
<dbReference type="InterPro" id="IPR036853">
    <property type="entry name" value="Ribosomal_uL14_sf"/>
</dbReference>
<dbReference type="NCBIfam" id="TIGR01067">
    <property type="entry name" value="rplN_bact"/>
    <property type="match status" value="1"/>
</dbReference>
<dbReference type="PANTHER" id="PTHR11761">
    <property type="entry name" value="50S/60S RIBOSOMAL PROTEIN L14/L23"/>
    <property type="match status" value="1"/>
</dbReference>
<dbReference type="PANTHER" id="PTHR11761:SF3">
    <property type="entry name" value="LARGE RIBOSOMAL SUBUNIT PROTEIN UL14M"/>
    <property type="match status" value="1"/>
</dbReference>
<dbReference type="Pfam" id="PF00238">
    <property type="entry name" value="Ribosomal_L14"/>
    <property type="match status" value="1"/>
</dbReference>
<dbReference type="SMART" id="SM01374">
    <property type="entry name" value="Ribosomal_L14"/>
    <property type="match status" value="1"/>
</dbReference>
<dbReference type="SUPFAM" id="SSF50193">
    <property type="entry name" value="Ribosomal protein L14"/>
    <property type="match status" value="1"/>
</dbReference>
<accession>Q3AMP0</accession>
<gene>
    <name evidence="1" type="primary">rplN</name>
    <name evidence="1" type="synonym">rpl14</name>
    <name type="ordered locus">Syncc9605_0366</name>
</gene>
<name>RL14_SYNSC</name>
<feature type="chain" id="PRO_1000055739" description="Large ribosomal subunit protein uL14">
    <location>
        <begin position="1"/>
        <end position="121"/>
    </location>
</feature>
<organism>
    <name type="scientific">Synechococcus sp. (strain CC9605)</name>
    <dbReference type="NCBI Taxonomy" id="110662"/>
    <lineage>
        <taxon>Bacteria</taxon>
        <taxon>Bacillati</taxon>
        <taxon>Cyanobacteriota</taxon>
        <taxon>Cyanophyceae</taxon>
        <taxon>Synechococcales</taxon>
        <taxon>Synechococcaceae</taxon>
        <taxon>Synechococcus</taxon>
    </lineage>
</organism>
<evidence type="ECO:0000255" key="1">
    <source>
        <dbReference type="HAMAP-Rule" id="MF_01367"/>
    </source>
</evidence>
<evidence type="ECO:0000305" key="2"/>
<keyword id="KW-0687">Ribonucleoprotein</keyword>
<keyword id="KW-0689">Ribosomal protein</keyword>
<keyword id="KW-0694">RNA-binding</keyword>
<keyword id="KW-0699">rRNA-binding</keyword>
<reference key="1">
    <citation type="submission" date="2005-07" db="EMBL/GenBank/DDBJ databases">
        <title>Complete sequence of Synechococcus sp. CC9605.</title>
        <authorList>
            <consortium name="US DOE Joint Genome Institute"/>
            <person name="Copeland A."/>
            <person name="Lucas S."/>
            <person name="Lapidus A."/>
            <person name="Barry K."/>
            <person name="Detter J.C."/>
            <person name="Glavina T."/>
            <person name="Hammon N."/>
            <person name="Israni S."/>
            <person name="Pitluck S."/>
            <person name="Schmutz J."/>
            <person name="Martinez M."/>
            <person name="Larimer F."/>
            <person name="Land M."/>
            <person name="Kyrpides N."/>
            <person name="Ivanova N."/>
            <person name="Richardson P."/>
        </authorList>
    </citation>
    <scope>NUCLEOTIDE SEQUENCE [LARGE SCALE GENOMIC DNA]</scope>
    <source>
        <strain>CC9605</strain>
    </source>
</reference>